<feature type="chain" id="PRO_1000045501" description="DNA primase small subunit PriS">
    <location>
        <begin position="1"/>
        <end position="390"/>
    </location>
</feature>
<feature type="active site" evidence="1">
    <location>
        <position position="98"/>
    </location>
</feature>
<feature type="active site" evidence="1">
    <location>
        <position position="100"/>
    </location>
</feature>
<feature type="active site" evidence="1">
    <location>
        <position position="296"/>
    </location>
</feature>
<evidence type="ECO:0000255" key="1">
    <source>
        <dbReference type="HAMAP-Rule" id="MF_00700"/>
    </source>
</evidence>
<organism>
    <name type="scientific">Methanococcoides burtonii (strain DSM 6242 / NBRC 107633 / OCM 468 / ACE-M)</name>
    <dbReference type="NCBI Taxonomy" id="259564"/>
    <lineage>
        <taxon>Archaea</taxon>
        <taxon>Methanobacteriati</taxon>
        <taxon>Methanobacteriota</taxon>
        <taxon>Stenosarchaea group</taxon>
        <taxon>Methanomicrobia</taxon>
        <taxon>Methanosarcinales</taxon>
        <taxon>Methanosarcinaceae</taxon>
        <taxon>Methanococcoides</taxon>
    </lineage>
</organism>
<comment type="function">
    <text evidence="1">Catalytic subunit of DNA primase, an RNA polymerase that catalyzes the synthesis of short RNA molecules used as primers for DNA polymerase during DNA replication. The small subunit contains the primase catalytic core and has DNA synthesis activity on its own. Binding to the large subunit stabilizes and modulates the activity, increasing the rate of DNA synthesis while decreasing the length of the DNA fragments, and conferring RNA synthesis capability. The DNA polymerase activity may enable DNA primase to also catalyze primer extension after primer synthesis. May also play a role in DNA repair.</text>
</comment>
<comment type="cofactor">
    <cofactor evidence="1">
        <name>Mg(2+)</name>
        <dbReference type="ChEBI" id="CHEBI:18420"/>
    </cofactor>
    <cofactor evidence="1">
        <name>Mn(2+)</name>
        <dbReference type="ChEBI" id="CHEBI:29035"/>
    </cofactor>
</comment>
<comment type="subunit">
    <text evidence="1">Heterodimer of a small subunit (PriS) and a large subunit (PriL).</text>
</comment>
<comment type="similarity">
    <text evidence="1">Belongs to the eukaryotic-type primase small subunit family.</text>
</comment>
<dbReference type="EC" id="2.7.7.-" evidence="1"/>
<dbReference type="EMBL" id="CP000300">
    <property type="protein sequence ID" value="ABE52307.1"/>
    <property type="molecule type" value="Genomic_DNA"/>
</dbReference>
<dbReference type="RefSeq" id="WP_011499452.1">
    <property type="nucleotide sequence ID" value="NC_007955.1"/>
</dbReference>
<dbReference type="SMR" id="Q12W69"/>
<dbReference type="STRING" id="259564.Mbur_1392"/>
<dbReference type="GeneID" id="3997081"/>
<dbReference type="KEGG" id="mbu:Mbur_1392"/>
<dbReference type="HOGENOM" id="CLU_056123_1_0_2"/>
<dbReference type="OrthoDB" id="31125at2157"/>
<dbReference type="Proteomes" id="UP000001979">
    <property type="component" value="Chromosome"/>
</dbReference>
<dbReference type="GO" id="GO:0000428">
    <property type="term" value="C:DNA-directed RNA polymerase complex"/>
    <property type="evidence" value="ECO:0007669"/>
    <property type="project" value="UniProtKB-KW"/>
</dbReference>
<dbReference type="GO" id="GO:1990077">
    <property type="term" value="C:primosome complex"/>
    <property type="evidence" value="ECO:0007669"/>
    <property type="project" value="UniProtKB-KW"/>
</dbReference>
<dbReference type="GO" id="GO:0003899">
    <property type="term" value="F:DNA-directed RNA polymerase activity"/>
    <property type="evidence" value="ECO:0007669"/>
    <property type="project" value="InterPro"/>
</dbReference>
<dbReference type="GO" id="GO:0046872">
    <property type="term" value="F:metal ion binding"/>
    <property type="evidence" value="ECO:0007669"/>
    <property type="project" value="UniProtKB-KW"/>
</dbReference>
<dbReference type="GO" id="GO:0006269">
    <property type="term" value="P:DNA replication, synthesis of primer"/>
    <property type="evidence" value="ECO:0007669"/>
    <property type="project" value="UniProtKB-UniRule"/>
</dbReference>
<dbReference type="CDD" id="cd04860">
    <property type="entry name" value="AE_Prim_S"/>
    <property type="match status" value="1"/>
</dbReference>
<dbReference type="Gene3D" id="3.90.920.10">
    <property type="entry name" value="DNA primase, PRIM domain"/>
    <property type="match status" value="1"/>
</dbReference>
<dbReference type="HAMAP" id="MF_00700">
    <property type="entry name" value="DNA_primase_sml_arc"/>
    <property type="match status" value="1"/>
</dbReference>
<dbReference type="InterPro" id="IPR002755">
    <property type="entry name" value="DNA_primase_S"/>
</dbReference>
<dbReference type="InterPro" id="IPR014052">
    <property type="entry name" value="DNA_primase_ssu_euk/arc"/>
</dbReference>
<dbReference type="InterPro" id="IPR023639">
    <property type="entry name" value="DNA_primase_ssu_PriS"/>
</dbReference>
<dbReference type="NCBIfam" id="TIGR00335">
    <property type="entry name" value="primase_sml"/>
    <property type="match status" value="1"/>
</dbReference>
<dbReference type="PANTHER" id="PTHR10536">
    <property type="entry name" value="DNA PRIMASE SMALL SUBUNIT"/>
    <property type="match status" value="1"/>
</dbReference>
<dbReference type="Pfam" id="PF01896">
    <property type="entry name" value="DNA_primase_S"/>
    <property type="match status" value="1"/>
</dbReference>
<dbReference type="SUPFAM" id="SSF56747">
    <property type="entry name" value="Prim-pol domain"/>
    <property type="match status" value="1"/>
</dbReference>
<gene>
    <name evidence="1" type="primary">priS</name>
    <name type="synonym">priA</name>
    <name type="ordered locus">Mbur_1392</name>
</gene>
<proteinExistence type="inferred from homology"/>
<protein>
    <recommendedName>
        <fullName evidence="1">DNA primase small subunit PriS</fullName>
        <ecNumber evidence="1">2.7.7.-</ecNumber>
    </recommendedName>
</protein>
<accession>Q12W69</accession>
<sequence length="390" mass="43866">MDLKTKYYLKSKFQEYYRTAKIHLPAKLPEREWGVLSFDDMPETVMRRHKSFGSAGEVEDYLTGMAPAHVYYSVAYYTYPNAPTMKEKQWLAADLIFDLDADHIPGAPNSYSDMLDHVKKETLKLYDLLTDDFGFKEEDIGAVFSGGRGYHFHISDPRVLSLESAERREIVDYISGRGLNLDKIFVKKGVSGDAGSEKATMNVFPSEDDGGWGGRINHHMIAYLRELAAKEDAEKLFTGFDRIGKKTAKRIVEILRDETQVDLLKKGNMEALSRVNKDIIQTLAERSVTELSASVDEPVTGDIKRLIRLPGSLHGKSGMCVTSLSISQLEDFDPLNDAIVFSDKPVKLKVIRTFAVQMKGKDLHVEEGVQELPEYAAIYLMCRGAAEYGP</sequence>
<keyword id="KW-0235">DNA replication</keyword>
<keyword id="KW-0240">DNA-directed RNA polymerase</keyword>
<keyword id="KW-0460">Magnesium</keyword>
<keyword id="KW-0464">Manganese</keyword>
<keyword id="KW-0479">Metal-binding</keyword>
<keyword id="KW-0548">Nucleotidyltransferase</keyword>
<keyword id="KW-0639">Primosome</keyword>
<keyword id="KW-0804">Transcription</keyword>
<keyword id="KW-0808">Transferase</keyword>
<name>PRIS_METBU</name>
<reference key="1">
    <citation type="journal article" date="2009" name="ISME J.">
        <title>The genome sequence of the psychrophilic archaeon, Methanococcoides burtonii: the role of genome evolution in cold adaptation.</title>
        <authorList>
            <person name="Allen M.A."/>
            <person name="Lauro F.M."/>
            <person name="Williams T.J."/>
            <person name="Burg D."/>
            <person name="Siddiqui K.S."/>
            <person name="De Francisci D."/>
            <person name="Chong K.W."/>
            <person name="Pilak O."/>
            <person name="Chew H.H."/>
            <person name="De Maere M.Z."/>
            <person name="Ting L."/>
            <person name="Katrib M."/>
            <person name="Ng C."/>
            <person name="Sowers K.R."/>
            <person name="Galperin M.Y."/>
            <person name="Anderson I.J."/>
            <person name="Ivanova N."/>
            <person name="Dalin E."/>
            <person name="Martinez M."/>
            <person name="Lapidus A."/>
            <person name="Hauser L."/>
            <person name="Land M."/>
            <person name="Thomas T."/>
            <person name="Cavicchioli R."/>
        </authorList>
    </citation>
    <scope>NUCLEOTIDE SEQUENCE [LARGE SCALE GENOMIC DNA]</scope>
    <source>
        <strain>DSM 6242 / NBRC 107633 / OCM 468 / ACE-M</strain>
    </source>
</reference>